<keyword id="KW-0131">Cell cycle</keyword>
<keyword id="KW-0132">Cell division</keyword>
<keyword id="KW-0238">DNA-binding</keyword>
<keyword id="KW-1185">Reference proteome</keyword>
<sequence>MSFTVKVKEELLSLASRDKNELSAMIKMSGSLGLASSGLTLSVTTENAKIARHLYELLSDLYQVKSEIRHHQKTNLRKNRVYTVFLDQKVEEILSDLHLADSFFGIEAGIDQAILTDDEASRAYLRGAFLSNGSMREPDSGKYQLEILSVYLDHAEDLAALMRRFLLDAKTIERKKGAVTYLQRAEDIMDFLIVIGAMEAMAEFESLKLMREARNDLNRANNAETANIARTVTASMKTINNIAKISDNIGIESLPVDLQEVAQLRIQHPDYSIQQLADSLSRPLTKSGVNHRLRKINKIADEL</sequence>
<dbReference type="EMBL" id="CP000387">
    <property type="protein sequence ID" value="ABN44243.1"/>
    <property type="molecule type" value="Genomic_DNA"/>
</dbReference>
<dbReference type="RefSeq" id="WP_002925343.1">
    <property type="nucleotide sequence ID" value="NC_009009.1"/>
</dbReference>
<dbReference type="RefSeq" id="YP_001034793.1">
    <property type="nucleotide sequence ID" value="NC_009009.1"/>
</dbReference>
<dbReference type="SMR" id="A3CM38"/>
<dbReference type="STRING" id="388919.SSA_0812"/>
<dbReference type="KEGG" id="ssa:SSA_0812"/>
<dbReference type="PATRIC" id="fig|388919.9.peg.778"/>
<dbReference type="eggNOG" id="COG1481">
    <property type="taxonomic scope" value="Bacteria"/>
</dbReference>
<dbReference type="HOGENOM" id="CLU_053282_0_0_9"/>
<dbReference type="OrthoDB" id="401278at2"/>
<dbReference type="Proteomes" id="UP000002148">
    <property type="component" value="Chromosome"/>
</dbReference>
<dbReference type="GO" id="GO:0003677">
    <property type="term" value="F:DNA binding"/>
    <property type="evidence" value="ECO:0007669"/>
    <property type="project" value="UniProtKB-UniRule"/>
</dbReference>
<dbReference type="GO" id="GO:0051301">
    <property type="term" value="P:cell division"/>
    <property type="evidence" value="ECO:0007669"/>
    <property type="project" value="UniProtKB-UniRule"/>
</dbReference>
<dbReference type="GO" id="GO:0043937">
    <property type="term" value="P:regulation of sporulation"/>
    <property type="evidence" value="ECO:0007669"/>
    <property type="project" value="InterPro"/>
</dbReference>
<dbReference type="Gene3D" id="3.10.28.10">
    <property type="entry name" value="Homing endonucleases"/>
    <property type="match status" value="1"/>
</dbReference>
<dbReference type="HAMAP" id="MF_01420">
    <property type="entry name" value="HTH_type_WhiA"/>
    <property type="match status" value="1"/>
</dbReference>
<dbReference type="InterPro" id="IPR027434">
    <property type="entry name" value="Homing_endonucl"/>
</dbReference>
<dbReference type="InterPro" id="IPR018478">
    <property type="entry name" value="Sporu_reg_WhiA_N_dom"/>
</dbReference>
<dbReference type="InterPro" id="IPR003802">
    <property type="entry name" value="Sporulation_regulator_WhiA"/>
</dbReference>
<dbReference type="InterPro" id="IPR023054">
    <property type="entry name" value="Sporulation_regulator_WhiA_C"/>
</dbReference>
<dbReference type="InterPro" id="IPR039518">
    <property type="entry name" value="WhiA_LAGLIDADG_dom"/>
</dbReference>
<dbReference type="NCBIfam" id="TIGR00647">
    <property type="entry name" value="DNA_bind_WhiA"/>
    <property type="match status" value="1"/>
</dbReference>
<dbReference type="PANTHER" id="PTHR37307">
    <property type="entry name" value="CELL DIVISION PROTEIN WHIA-RELATED"/>
    <property type="match status" value="1"/>
</dbReference>
<dbReference type="PANTHER" id="PTHR37307:SF1">
    <property type="entry name" value="CELL DIVISION PROTEIN WHIA-RELATED"/>
    <property type="match status" value="1"/>
</dbReference>
<dbReference type="Pfam" id="PF02650">
    <property type="entry name" value="HTH_WhiA"/>
    <property type="match status" value="1"/>
</dbReference>
<dbReference type="Pfam" id="PF14527">
    <property type="entry name" value="LAGLIDADG_WhiA"/>
    <property type="match status" value="1"/>
</dbReference>
<dbReference type="Pfam" id="PF10298">
    <property type="entry name" value="WhiA_N"/>
    <property type="match status" value="1"/>
</dbReference>
<dbReference type="SUPFAM" id="SSF55608">
    <property type="entry name" value="Homing endonucleases"/>
    <property type="match status" value="1"/>
</dbReference>
<organism>
    <name type="scientific">Streptococcus sanguinis (strain SK36)</name>
    <dbReference type="NCBI Taxonomy" id="388919"/>
    <lineage>
        <taxon>Bacteria</taxon>
        <taxon>Bacillati</taxon>
        <taxon>Bacillota</taxon>
        <taxon>Bacilli</taxon>
        <taxon>Lactobacillales</taxon>
        <taxon>Streptococcaceae</taxon>
        <taxon>Streptococcus</taxon>
    </lineage>
</organism>
<accession>A3CM38</accession>
<reference key="1">
    <citation type="journal article" date="2007" name="J. Bacteriol.">
        <title>Genome of the opportunistic pathogen Streptococcus sanguinis.</title>
        <authorList>
            <person name="Xu P."/>
            <person name="Alves J.M."/>
            <person name="Kitten T."/>
            <person name="Brown A."/>
            <person name="Chen Z."/>
            <person name="Ozaki L.S."/>
            <person name="Manque P."/>
            <person name="Ge X."/>
            <person name="Serrano M.G."/>
            <person name="Puiu D."/>
            <person name="Hendricks S."/>
            <person name="Wang Y."/>
            <person name="Chaplin M.D."/>
            <person name="Akan D."/>
            <person name="Paik S."/>
            <person name="Peterson D.L."/>
            <person name="Macrina F.L."/>
            <person name="Buck G.A."/>
        </authorList>
    </citation>
    <scope>NUCLEOTIDE SEQUENCE [LARGE SCALE GENOMIC DNA]</scope>
    <source>
        <strain>SK36</strain>
    </source>
</reference>
<protein>
    <recommendedName>
        <fullName evidence="1">Probable cell division protein WhiA</fullName>
    </recommendedName>
</protein>
<feature type="chain" id="PRO_0000376593" description="Probable cell division protein WhiA">
    <location>
        <begin position="1"/>
        <end position="303"/>
    </location>
</feature>
<feature type="DNA-binding region" description="H-T-H motif" evidence="1">
    <location>
        <begin position="272"/>
        <end position="303"/>
    </location>
</feature>
<evidence type="ECO:0000255" key="1">
    <source>
        <dbReference type="HAMAP-Rule" id="MF_01420"/>
    </source>
</evidence>
<comment type="function">
    <text evidence="1">Involved in cell division and chromosome segregation.</text>
</comment>
<comment type="similarity">
    <text evidence="1">Belongs to the WhiA family.</text>
</comment>
<proteinExistence type="inferred from homology"/>
<name>WHIA_STRSV</name>
<gene>
    <name evidence="1" type="primary">whiA</name>
    <name type="ordered locus">SSA_0812</name>
</gene>